<comment type="function">
    <text evidence="1">Contributes to the regulation of the Wnt signaling pathway. Down-regulates CTNNB1-mediated transcriptional activation of target genes, such as CCND1, and may thereby act as tumor suppressor. May be involved in dendritic cell and neuron differentiation (By similarity).</text>
</comment>
<comment type="subunit">
    <text evidence="1">Interacts with CTNNB1.</text>
</comment>
<comment type="subcellular location">
    <subcellularLocation>
        <location evidence="1">Cytoplasm</location>
    </subcellularLocation>
    <subcellularLocation>
        <location evidence="1">Cytoplasm</location>
        <location evidence="1">Perinuclear region</location>
    </subcellularLocation>
    <subcellularLocation>
        <location evidence="1">Cell projection</location>
        <location evidence="1">Growth cone</location>
    </subcellularLocation>
    <text evidence="1">In neurons, seems to concentrate at axonal growth cone. Perinuclear in neurons (By similarity).</text>
</comment>
<comment type="similarity">
    <text evidence="5">Belongs to the NDRG family.</text>
</comment>
<proteinExistence type="evidence at transcript level"/>
<dbReference type="EMBL" id="BC103467">
    <property type="protein sequence ID" value="AAI03468.1"/>
    <property type="molecule type" value="mRNA"/>
</dbReference>
<dbReference type="RefSeq" id="NP_001030381.1">
    <property type="nucleotide sequence ID" value="NM_001035304.1"/>
</dbReference>
<dbReference type="RefSeq" id="XP_024853263.1">
    <property type="nucleotide sequence ID" value="XM_024997495.2"/>
</dbReference>
<dbReference type="RefSeq" id="XP_024853265.1">
    <property type="nucleotide sequence ID" value="XM_024997497.2"/>
</dbReference>
<dbReference type="RefSeq" id="XP_024853266.1">
    <property type="nucleotide sequence ID" value="XM_024997498.2"/>
</dbReference>
<dbReference type="RefSeq" id="XP_059746347.1">
    <property type="nucleotide sequence ID" value="XM_059890364.1"/>
</dbReference>
<dbReference type="SMR" id="Q3ZBA8"/>
<dbReference type="FunCoup" id="Q3ZBA8">
    <property type="interactions" value="503"/>
</dbReference>
<dbReference type="STRING" id="9913.ENSBTAP00000073589"/>
<dbReference type="ESTHER" id="bovin-ndrg2">
    <property type="family name" value="Ndr_family"/>
</dbReference>
<dbReference type="PaxDb" id="9913-ENSBTAP00000001121"/>
<dbReference type="PeptideAtlas" id="Q3ZBA8"/>
<dbReference type="Ensembl" id="ENSBTAT00000080282.1">
    <property type="protein sequence ID" value="ENSBTAP00000073589.1"/>
    <property type="gene ID" value="ENSBTAG00000000843.7"/>
</dbReference>
<dbReference type="GeneID" id="515063"/>
<dbReference type="KEGG" id="bta:515063"/>
<dbReference type="CTD" id="57447"/>
<dbReference type="VEuPathDB" id="HostDB:ENSBTAG00000000843"/>
<dbReference type="VGNC" id="VGNC:50007">
    <property type="gene designation" value="NDRG2"/>
</dbReference>
<dbReference type="eggNOG" id="KOG2931">
    <property type="taxonomic scope" value="Eukaryota"/>
</dbReference>
<dbReference type="GeneTree" id="ENSGT00950000182872"/>
<dbReference type="InParanoid" id="Q3ZBA8"/>
<dbReference type="OMA" id="KTCFQPL"/>
<dbReference type="OrthoDB" id="741027at2759"/>
<dbReference type="Proteomes" id="UP000009136">
    <property type="component" value="Chromosome 10"/>
</dbReference>
<dbReference type="Bgee" id="ENSBTAG00000000843">
    <property type="expression patterns" value="Expressed in temporal cortex and 103 other cell types or tissues"/>
</dbReference>
<dbReference type="GO" id="GO:0005737">
    <property type="term" value="C:cytoplasm"/>
    <property type="evidence" value="ECO:0000318"/>
    <property type="project" value="GO_Central"/>
</dbReference>
<dbReference type="GO" id="GO:0005794">
    <property type="term" value="C:Golgi apparatus"/>
    <property type="evidence" value="ECO:0007669"/>
    <property type="project" value="Ensembl"/>
</dbReference>
<dbReference type="GO" id="GO:0030426">
    <property type="term" value="C:growth cone"/>
    <property type="evidence" value="ECO:0007669"/>
    <property type="project" value="UniProtKB-SubCell"/>
</dbReference>
<dbReference type="GO" id="GO:0005634">
    <property type="term" value="C:nucleus"/>
    <property type="evidence" value="ECO:0007669"/>
    <property type="project" value="Ensembl"/>
</dbReference>
<dbReference type="GO" id="GO:0048471">
    <property type="term" value="C:perinuclear region of cytoplasm"/>
    <property type="evidence" value="ECO:0007669"/>
    <property type="project" value="UniProtKB-SubCell"/>
</dbReference>
<dbReference type="GO" id="GO:0030154">
    <property type="term" value="P:cell differentiation"/>
    <property type="evidence" value="ECO:0007669"/>
    <property type="project" value="UniProtKB-KW"/>
</dbReference>
<dbReference type="GO" id="GO:0001818">
    <property type="term" value="P:negative regulation of cytokine production"/>
    <property type="evidence" value="ECO:0007669"/>
    <property type="project" value="Ensembl"/>
</dbReference>
<dbReference type="GO" id="GO:0070373">
    <property type="term" value="P:negative regulation of ERK1 and ERK2 cascade"/>
    <property type="evidence" value="ECO:0007669"/>
    <property type="project" value="Ensembl"/>
</dbReference>
<dbReference type="GO" id="GO:1904706">
    <property type="term" value="P:negative regulation of vascular associated smooth muscle cell proliferation"/>
    <property type="evidence" value="ECO:0007669"/>
    <property type="project" value="Ensembl"/>
</dbReference>
<dbReference type="GO" id="GO:0007399">
    <property type="term" value="P:nervous system development"/>
    <property type="evidence" value="ECO:0007669"/>
    <property type="project" value="UniProtKB-KW"/>
</dbReference>
<dbReference type="GO" id="GO:0090361">
    <property type="term" value="P:regulation of platelet-derived growth factor production"/>
    <property type="evidence" value="ECO:0007669"/>
    <property type="project" value="Ensembl"/>
</dbReference>
<dbReference type="GO" id="GO:0010574">
    <property type="term" value="P:regulation of vascular endothelial growth factor production"/>
    <property type="evidence" value="ECO:0007669"/>
    <property type="project" value="Ensembl"/>
</dbReference>
<dbReference type="GO" id="GO:0007165">
    <property type="term" value="P:signal transduction"/>
    <property type="evidence" value="ECO:0000318"/>
    <property type="project" value="GO_Central"/>
</dbReference>
<dbReference type="GO" id="GO:1990874">
    <property type="term" value="P:vascular associated smooth muscle cell proliferation"/>
    <property type="evidence" value="ECO:0007669"/>
    <property type="project" value="Ensembl"/>
</dbReference>
<dbReference type="GO" id="GO:0016055">
    <property type="term" value="P:Wnt signaling pathway"/>
    <property type="evidence" value="ECO:0007669"/>
    <property type="project" value="UniProtKB-KW"/>
</dbReference>
<dbReference type="FunFam" id="3.40.50.1820:FF:000034">
    <property type="entry name" value="NDRG2 isoform 1"/>
    <property type="match status" value="1"/>
</dbReference>
<dbReference type="Gene3D" id="3.40.50.1820">
    <property type="entry name" value="alpha/beta hydrolase"/>
    <property type="match status" value="1"/>
</dbReference>
<dbReference type="InterPro" id="IPR029058">
    <property type="entry name" value="AB_hydrolase_fold"/>
</dbReference>
<dbReference type="InterPro" id="IPR004142">
    <property type="entry name" value="NDRG"/>
</dbReference>
<dbReference type="PANTHER" id="PTHR11034">
    <property type="entry name" value="N-MYC DOWNSTREAM REGULATED"/>
    <property type="match status" value="1"/>
</dbReference>
<dbReference type="Pfam" id="PF03096">
    <property type="entry name" value="Ndr"/>
    <property type="match status" value="1"/>
</dbReference>
<dbReference type="SUPFAM" id="SSF53474">
    <property type="entry name" value="alpha/beta-Hydrolases"/>
    <property type="match status" value="1"/>
</dbReference>
<evidence type="ECO:0000250" key="1"/>
<evidence type="ECO:0000250" key="2">
    <source>
        <dbReference type="UniProtKB" id="Q9QYG0"/>
    </source>
</evidence>
<evidence type="ECO:0000250" key="3">
    <source>
        <dbReference type="UniProtKB" id="Q9UN36"/>
    </source>
</evidence>
<evidence type="ECO:0000256" key="4">
    <source>
        <dbReference type="SAM" id="MobiDB-lite"/>
    </source>
</evidence>
<evidence type="ECO:0000305" key="5"/>
<sequence length="357" mass="39208">MAELREVQITEEKPLLPGQTPEVAKTHSVETPYGSVTFTVYGTPKPKRPAILTYHDVGLNYKSCFQPLFQFADMQEIIQNFVRVHVDAPGMEEGAPVFPLGYQYPSLDQLADMIPCILQYLNFSTIIGIGVGAGAYVLSRYALTHPDTVEGLVLINIDPNAKGWMDWAAHKLTGLTSSISEMILGHLFSQEELSGNSELIQKYRNIIAHAPNLDNIELYWNSYNNRRDLNFVRGGDTTLKCPVMLVVGDQAPHEDAVVECNSKLDPTQTSFLKMADSGGQPQLTQPGKLTEAFKYFLQGMGYMASSCMTRLSRSRTASLTSAASIDGNRSRSRTLSQSSESGTLSSGPPGHTMEVSC</sequence>
<reference key="1">
    <citation type="submission" date="2005-08" db="EMBL/GenBank/DDBJ databases">
        <authorList>
            <consortium name="NIH - Mammalian Gene Collection (MGC) project"/>
        </authorList>
    </citation>
    <scope>NUCLEOTIDE SEQUENCE [LARGE SCALE MRNA]</scope>
    <source>
        <strain>Hereford</strain>
        <tissue>Uterus</tissue>
    </source>
</reference>
<protein>
    <recommendedName>
        <fullName>Protein NDRG2</fullName>
    </recommendedName>
    <alternativeName>
        <fullName>N-myc downstream-regulated gene 2 protein</fullName>
    </alternativeName>
</protein>
<organism>
    <name type="scientific">Bos taurus</name>
    <name type="common">Bovine</name>
    <dbReference type="NCBI Taxonomy" id="9913"/>
    <lineage>
        <taxon>Eukaryota</taxon>
        <taxon>Metazoa</taxon>
        <taxon>Chordata</taxon>
        <taxon>Craniata</taxon>
        <taxon>Vertebrata</taxon>
        <taxon>Euteleostomi</taxon>
        <taxon>Mammalia</taxon>
        <taxon>Eutheria</taxon>
        <taxon>Laurasiatheria</taxon>
        <taxon>Artiodactyla</taxon>
        <taxon>Ruminantia</taxon>
        <taxon>Pecora</taxon>
        <taxon>Bovidae</taxon>
        <taxon>Bovinae</taxon>
        <taxon>Bos</taxon>
    </lineage>
</organism>
<gene>
    <name type="primary">NDRG2</name>
</gene>
<keyword id="KW-0007">Acetylation</keyword>
<keyword id="KW-0966">Cell projection</keyword>
<keyword id="KW-0963">Cytoplasm</keyword>
<keyword id="KW-0217">Developmental protein</keyword>
<keyword id="KW-0221">Differentiation</keyword>
<keyword id="KW-0524">Neurogenesis</keyword>
<keyword id="KW-0597">Phosphoprotein</keyword>
<keyword id="KW-1185">Reference proteome</keyword>
<keyword id="KW-0043">Tumor suppressor</keyword>
<keyword id="KW-0879">Wnt signaling pathway</keyword>
<accession>Q3ZBA8</accession>
<feature type="initiator methionine" description="Removed" evidence="3">
    <location>
        <position position="1"/>
    </location>
</feature>
<feature type="chain" id="PRO_0000441165" description="Protein NDRG2">
    <location>
        <begin position="2"/>
        <end position="357"/>
    </location>
</feature>
<feature type="region of interest" description="Disordered" evidence="4">
    <location>
        <begin position="1"/>
        <end position="26"/>
    </location>
</feature>
<feature type="region of interest" description="Disordered" evidence="4">
    <location>
        <begin position="320"/>
        <end position="357"/>
    </location>
</feature>
<feature type="compositionally biased region" description="Basic and acidic residues" evidence="4">
    <location>
        <begin position="1"/>
        <end position="14"/>
    </location>
</feature>
<feature type="compositionally biased region" description="Low complexity" evidence="4">
    <location>
        <begin position="333"/>
        <end position="347"/>
    </location>
</feature>
<feature type="modified residue" description="N-acetylalanine" evidence="3">
    <location>
        <position position="2"/>
    </location>
</feature>
<feature type="modified residue" description="Phosphothreonine" evidence="3">
    <location>
        <position position="20"/>
    </location>
</feature>
<feature type="modified residue" description="Phosphoserine" evidence="3">
    <location>
        <position position="312"/>
    </location>
</feature>
<feature type="modified residue" description="Phosphoserine" evidence="3">
    <location>
        <position position="314"/>
    </location>
</feature>
<feature type="modified residue" description="Phosphothreonine" evidence="2">
    <location>
        <position position="316"/>
    </location>
</feature>
<feature type="modified residue" description="Phosphoserine" evidence="2">
    <location>
        <position position="318"/>
    </location>
</feature>
<feature type="modified residue" description="Phosphothreonine" evidence="3">
    <location>
        <position position="320"/>
    </location>
</feature>
<feature type="modified residue" description="Phosphoserine" evidence="2">
    <location>
        <position position="321"/>
    </location>
</feature>
<feature type="modified residue" description="Phosphoserine" evidence="3">
    <location>
        <position position="324"/>
    </location>
</feature>
<feature type="modified residue" description="Phosphoserine" evidence="3">
    <location>
        <position position="330"/>
    </location>
</feature>
<feature type="modified residue" description="Phosphothreonine" evidence="2">
    <location>
        <position position="334"/>
    </location>
</feature>
<feature type="modified residue" description="Phosphoserine" evidence="2">
    <location>
        <position position="336"/>
    </location>
</feature>
<feature type="modified residue" description="Phosphoserine" evidence="2">
    <location>
        <position position="338"/>
    </location>
</feature>
<feature type="modified residue" description="Phosphoserine" evidence="2">
    <location>
        <position position="339"/>
    </location>
</feature>
<feature type="modified residue" description="Phosphoserine" evidence="2">
    <location>
        <position position="341"/>
    </location>
</feature>
<feature type="modified residue" description="Phosphothreonine" evidence="2">
    <location>
        <position position="343"/>
    </location>
</feature>
<feature type="modified residue" description="Phosphoserine" evidence="2">
    <location>
        <position position="356"/>
    </location>
</feature>
<name>NDRG2_BOVIN</name>